<feature type="chain" id="PRO_1000051753" description="Nucleotide-binding protein H16_A3060">
    <location>
        <begin position="1"/>
        <end position="161"/>
    </location>
</feature>
<sequence length="161" mass="18082">MPSFDVVCEANMVEVKNAVEQANKEISTRFDFKGSDARVEHKENELTAFADDDFKLSQVKDVLINKMAKRNVDVRFLDYGKIDKISGDKVKQVISIKKGVTGDLSKKIVRIIKDSKIKVQASIQGDAVRVSGAKRDDLQSVMAMLRKDVSEAPLDFNNFRD</sequence>
<gene>
    <name type="ordered locus">H16_A3060</name>
</gene>
<protein>
    <recommendedName>
        <fullName evidence="1">Nucleotide-binding protein H16_A3060</fullName>
    </recommendedName>
</protein>
<proteinExistence type="inferred from homology"/>
<accession>Q0K786</accession>
<comment type="function">
    <text evidence="1">Nucleotide-binding protein.</text>
</comment>
<comment type="similarity">
    <text evidence="1">Belongs to the YajQ family.</text>
</comment>
<evidence type="ECO:0000255" key="1">
    <source>
        <dbReference type="HAMAP-Rule" id="MF_00632"/>
    </source>
</evidence>
<organism>
    <name type="scientific">Cupriavidus necator (strain ATCC 17699 / DSM 428 / KCTC 22496 / NCIMB 10442 / H16 / Stanier 337)</name>
    <name type="common">Ralstonia eutropha</name>
    <dbReference type="NCBI Taxonomy" id="381666"/>
    <lineage>
        <taxon>Bacteria</taxon>
        <taxon>Pseudomonadati</taxon>
        <taxon>Pseudomonadota</taxon>
        <taxon>Betaproteobacteria</taxon>
        <taxon>Burkholderiales</taxon>
        <taxon>Burkholderiaceae</taxon>
        <taxon>Cupriavidus</taxon>
    </lineage>
</organism>
<keyword id="KW-0547">Nucleotide-binding</keyword>
<keyword id="KW-1185">Reference proteome</keyword>
<dbReference type="EMBL" id="AM260479">
    <property type="protein sequence ID" value="CAJ94135.1"/>
    <property type="molecule type" value="Genomic_DNA"/>
</dbReference>
<dbReference type="RefSeq" id="WP_010815005.1">
    <property type="nucleotide sequence ID" value="NZ_CP039287.1"/>
</dbReference>
<dbReference type="SMR" id="Q0K786"/>
<dbReference type="STRING" id="381666.H16_A3060"/>
<dbReference type="KEGG" id="reh:H16_A3060"/>
<dbReference type="eggNOG" id="COG1666">
    <property type="taxonomic scope" value="Bacteria"/>
</dbReference>
<dbReference type="HOGENOM" id="CLU_099839_1_0_4"/>
<dbReference type="OrthoDB" id="9801447at2"/>
<dbReference type="Proteomes" id="UP000008210">
    <property type="component" value="Chromosome 1"/>
</dbReference>
<dbReference type="GO" id="GO:0005829">
    <property type="term" value="C:cytosol"/>
    <property type="evidence" value="ECO:0007669"/>
    <property type="project" value="TreeGrafter"/>
</dbReference>
<dbReference type="GO" id="GO:0000166">
    <property type="term" value="F:nucleotide binding"/>
    <property type="evidence" value="ECO:0007669"/>
    <property type="project" value="TreeGrafter"/>
</dbReference>
<dbReference type="CDD" id="cd11740">
    <property type="entry name" value="YajQ_like"/>
    <property type="match status" value="1"/>
</dbReference>
<dbReference type="Gene3D" id="3.30.70.860">
    <property type="match status" value="1"/>
</dbReference>
<dbReference type="Gene3D" id="3.30.70.990">
    <property type="entry name" value="YajQ-like, domain 2"/>
    <property type="match status" value="1"/>
</dbReference>
<dbReference type="HAMAP" id="MF_00632">
    <property type="entry name" value="YajQ"/>
    <property type="match status" value="1"/>
</dbReference>
<dbReference type="InterPro" id="IPR007551">
    <property type="entry name" value="DUF520"/>
</dbReference>
<dbReference type="InterPro" id="IPR035571">
    <property type="entry name" value="UPF0234-like_C"/>
</dbReference>
<dbReference type="InterPro" id="IPR035570">
    <property type="entry name" value="UPF0234_N"/>
</dbReference>
<dbReference type="InterPro" id="IPR036183">
    <property type="entry name" value="YajQ-like_sf"/>
</dbReference>
<dbReference type="NCBIfam" id="NF003819">
    <property type="entry name" value="PRK05412.1"/>
    <property type="match status" value="1"/>
</dbReference>
<dbReference type="PANTHER" id="PTHR30476">
    <property type="entry name" value="UPF0234 PROTEIN YAJQ"/>
    <property type="match status" value="1"/>
</dbReference>
<dbReference type="PANTHER" id="PTHR30476:SF0">
    <property type="entry name" value="UPF0234 PROTEIN YAJQ"/>
    <property type="match status" value="1"/>
</dbReference>
<dbReference type="Pfam" id="PF04461">
    <property type="entry name" value="DUF520"/>
    <property type="match status" value="1"/>
</dbReference>
<dbReference type="SUPFAM" id="SSF89963">
    <property type="entry name" value="YajQ-like"/>
    <property type="match status" value="2"/>
</dbReference>
<reference key="1">
    <citation type="journal article" date="2006" name="Nat. Biotechnol.">
        <title>Genome sequence of the bioplastic-producing 'Knallgas' bacterium Ralstonia eutropha H16.</title>
        <authorList>
            <person name="Pohlmann A."/>
            <person name="Fricke W.F."/>
            <person name="Reinecke F."/>
            <person name="Kusian B."/>
            <person name="Liesegang H."/>
            <person name="Cramm R."/>
            <person name="Eitinger T."/>
            <person name="Ewering C."/>
            <person name="Poetter M."/>
            <person name="Schwartz E."/>
            <person name="Strittmatter A."/>
            <person name="Voss I."/>
            <person name="Gottschalk G."/>
            <person name="Steinbuechel A."/>
            <person name="Friedrich B."/>
            <person name="Bowien B."/>
        </authorList>
    </citation>
    <scope>NUCLEOTIDE SEQUENCE [LARGE SCALE GENOMIC DNA]</scope>
    <source>
        <strain>ATCC 17699 / DSM 428 / KCTC 22496 / NCIMB 10442 / H16 / Stanier 337</strain>
    </source>
</reference>
<name>Y3060_CUPNH</name>